<organism>
    <name type="scientific">Arabidopsis thaliana</name>
    <name type="common">Mouse-ear cress</name>
    <dbReference type="NCBI Taxonomy" id="3702"/>
    <lineage>
        <taxon>Eukaryota</taxon>
        <taxon>Viridiplantae</taxon>
        <taxon>Streptophyta</taxon>
        <taxon>Embryophyta</taxon>
        <taxon>Tracheophyta</taxon>
        <taxon>Spermatophyta</taxon>
        <taxon>Magnoliopsida</taxon>
        <taxon>eudicotyledons</taxon>
        <taxon>Gunneridae</taxon>
        <taxon>Pentapetalae</taxon>
        <taxon>rosids</taxon>
        <taxon>malvids</taxon>
        <taxon>Brassicales</taxon>
        <taxon>Brassicaceae</taxon>
        <taxon>Camelineae</taxon>
        <taxon>Arabidopsis</taxon>
    </lineage>
</organism>
<reference key="1">
    <citation type="journal article" date="2000" name="Nature">
        <title>Sequence and analysis of chromosome 3 of the plant Arabidopsis thaliana.</title>
        <authorList>
            <person name="Salanoubat M."/>
            <person name="Lemcke K."/>
            <person name="Rieger M."/>
            <person name="Ansorge W."/>
            <person name="Unseld M."/>
            <person name="Fartmann B."/>
            <person name="Valle G."/>
            <person name="Bloecker H."/>
            <person name="Perez-Alonso M."/>
            <person name="Obermaier B."/>
            <person name="Delseny M."/>
            <person name="Boutry M."/>
            <person name="Grivell L.A."/>
            <person name="Mache R."/>
            <person name="Puigdomenech P."/>
            <person name="De Simone V."/>
            <person name="Choisne N."/>
            <person name="Artiguenave F."/>
            <person name="Robert C."/>
            <person name="Brottier P."/>
            <person name="Wincker P."/>
            <person name="Cattolico L."/>
            <person name="Weissenbach J."/>
            <person name="Saurin W."/>
            <person name="Quetier F."/>
            <person name="Schaefer M."/>
            <person name="Mueller-Auer S."/>
            <person name="Gabel C."/>
            <person name="Fuchs M."/>
            <person name="Benes V."/>
            <person name="Wurmbach E."/>
            <person name="Drzonek H."/>
            <person name="Erfle H."/>
            <person name="Jordan N."/>
            <person name="Bangert S."/>
            <person name="Wiedelmann R."/>
            <person name="Kranz H."/>
            <person name="Voss H."/>
            <person name="Holland R."/>
            <person name="Brandt P."/>
            <person name="Nyakatura G."/>
            <person name="Vezzi A."/>
            <person name="D'Angelo M."/>
            <person name="Pallavicini A."/>
            <person name="Toppo S."/>
            <person name="Simionati B."/>
            <person name="Conrad A."/>
            <person name="Hornischer K."/>
            <person name="Kauer G."/>
            <person name="Loehnert T.-H."/>
            <person name="Nordsiek G."/>
            <person name="Reichelt J."/>
            <person name="Scharfe M."/>
            <person name="Schoen O."/>
            <person name="Bargues M."/>
            <person name="Terol J."/>
            <person name="Climent J."/>
            <person name="Navarro P."/>
            <person name="Collado C."/>
            <person name="Perez-Perez A."/>
            <person name="Ottenwaelder B."/>
            <person name="Duchemin D."/>
            <person name="Cooke R."/>
            <person name="Laudie M."/>
            <person name="Berger-Llauro C."/>
            <person name="Purnelle B."/>
            <person name="Masuy D."/>
            <person name="de Haan M."/>
            <person name="Maarse A.C."/>
            <person name="Alcaraz J.-P."/>
            <person name="Cottet A."/>
            <person name="Casacuberta E."/>
            <person name="Monfort A."/>
            <person name="Argiriou A."/>
            <person name="Flores M."/>
            <person name="Liguori R."/>
            <person name="Vitale D."/>
            <person name="Mannhaupt G."/>
            <person name="Haase D."/>
            <person name="Schoof H."/>
            <person name="Rudd S."/>
            <person name="Zaccaria P."/>
            <person name="Mewes H.-W."/>
            <person name="Mayer K.F.X."/>
            <person name="Kaul S."/>
            <person name="Town C.D."/>
            <person name="Koo H.L."/>
            <person name="Tallon L.J."/>
            <person name="Jenkins J."/>
            <person name="Rooney T."/>
            <person name="Rizzo M."/>
            <person name="Walts A."/>
            <person name="Utterback T."/>
            <person name="Fujii C.Y."/>
            <person name="Shea T.P."/>
            <person name="Creasy T.H."/>
            <person name="Haas B."/>
            <person name="Maiti R."/>
            <person name="Wu D."/>
            <person name="Peterson J."/>
            <person name="Van Aken S."/>
            <person name="Pai G."/>
            <person name="Militscher J."/>
            <person name="Sellers P."/>
            <person name="Gill J.E."/>
            <person name="Feldblyum T.V."/>
            <person name="Preuss D."/>
            <person name="Lin X."/>
            <person name="Nierman W.C."/>
            <person name="Salzberg S.L."/>
            <person name="White O."/>
            <person name="Venter J.C."/>
            <person name="Fraser C.M."/>
            <person name="Kaneko T."/>
            <person name="Nakamura Y."/>
            <person name="Sato S."/>
            <person name="Kato T."/>
            <person name="Asamizu E."/>
            <person name="Sasamoto S."/>
            <person name="Kimura T."/>
            <person name="Idesawa K."/>
            <person name="Kawashima K."/>
            <person name="Kishida Y."/>
            <person name="Kiyokawa C."/>
            <person name="Kohara M."/>
            <person name="Matsumoto M."/>
            <person name="Matsuno A."/>
            <person name="Muraki A."/>
            <person name="Nakayama S."/>
            <person name="Nakazaki N."/>
            <person name="Shinpo S."/>
            <person name="Takeuchi C."/>
            <person name="Wada T."/>
            <person name="Watanabe A."/>
            <person name="Yamada M."/>
            <person name="Yasuda M."/>
            <person name="Tabata S."/>
        </authorList>
    </citation>
    <scope>NUCLEOTIDE SEQUENCE [LARGE SCALE GENOMIC DNA]</scope>
    <source>
        <strain>cv. Columbia</strain>
    </source>
</reference>
<reference key="2">
    <citation type="journal article" date="2017" name="Plant J.">
        <title>Araport11: a complete reannotation of the Arabidopsis thaliana reference genome.</title>
        <authorList>
            <person name="Cheng C.Y."/>
            <person name="Krishnakumar V."/>
            <person name="Chan A.P."/>
            <person name="Thibaud-Nissen F."/>
            <person name="Schobel S."/>
            <person name="Town C.D."/>
        </authorList>
    </citation>
    <scope>GENOME REANNOTATION</scope>
    <source>
        <strain>cv. Columbia</strain>
    </source>
</reference>
<reference key="3">
    <citation type="journal article" date="2003" name="Science">
        <title>Empirical analysis of transcriptional activity in the Arabidopsis genome.</title>
        <authorList>
            <person name="Yamada K."/>
            <person name="Lim J."/>
            <person name="Dale J.M."/>
            <person name="Chen H."/>
            <person name="Shinn P."/>
            <person name="Palm C.J."/>
            <person name="Southwick A.M."/>
            <person name="Wu H.C."/>
            <person name="Kim C.J."/>
            <person name="Nguyen M."/>
            <person name="Pham P.K."/>
            <person name="Cheuk R.F."/>
            <person name="Karlin-Newmann G."/>
            <person name="Liu S.X."/>
            <person name="Lam B."/>
            <person name="Sakano H."/>
            <person name="Wu T."/>
            <person name="Yu G."/>
            <person name="Miranda M."/>
            <person name="Quach H.L."/>
            <person name="Tripp M."/>
            <person name="Chang C.H."/>
            <person name="Lee J.M."/>
            <person name="Toriumi M.J."/>
            <person name="Chan M.M."/>
            <person name="Tang C.C."/>
            <person name="Onodera C.S."/>
            <person name="Deng J.M."/>
            <person name="Akiyama K."/>
            <person name="Ansari Y."/>
            <person name="Arakawa T."/>
            <person name="Banh J."/>
            <person name="Banno F."/>
            <person name="Bowser L."/>
            <person name="Brooks S.Y."/>
            <person name="Carninci P."/>
            <person name="Chao Q."/>
            <person name="Choy N."/>
            <person name="Enju A."/>
            <person name="Goldsmith A.D."/>
            <person name="Gurjal M."/>
            <person name="Hansen N.F."/>
            <person name="Hayashizaki Y."/>
            <person name="Johnson-Hopson C."/>
            <person name="Hsuan V.W."/>
            <person name="Iida K."/>
            <person name="Karnes M."/>
            <person name="Khan S."/>
            <person name="Koesema E."/>
            <person name="Ishida J."/>
            <person name="Jiang P.X."/>
            <person name="Jones T."/>
            <person name="Kawai J."/>
            <person name="Kamiya A."/>
            <person name="Meyers C."/>
            <person name="Nakajima M."/>
            <person name="Narusaka M."/>
            <person name="Seki M."/>
            <person name="Sakurai T."/>
            <person name="Satou M."/>
            <person name="Tamse R."/>
            <person name="Vaysberg M."/>
            <person name="Wallender E.K."/>
            <person name="Wong C."/>
            <person name="Yamamura Y."/>
            <person name="Yuan S."/>
            <person name="Shinozaki K."/>
            <person name="Davis R.W."/>
            <person name="Theologis A."/>
            <person name="Ecker J.R."/>
        </authorList>
    </citation>
    <scope>NUCLEOTIDE SEQUENCE [LARGE SCALE MRNA]</scope>
    <source>
        <strain>cv. Columbia</strain>
    </source>
</reference>
<reference key="4">
    <citation type="submission" date="2005-03" db="EMBL/GenBank/DDBJ databases">
        <title>Large-scale analysis of RIKEN Arabidopsis full-length (RAFL) cDNAs.</title>
        <authorList>
            <person name="Totoki Y."/>
            <person name="Seki M."/>
            <person name="Ishida J."/>
            <person name="Nakajima M."/>
            <person name="Enju A."/>
            <person name="Kamiya A."/>
            <person name="Narusaka M."/>
            <person name="Shin-i T."/>
            <person name="Nakagawa M."/>
            <person name="Sakamoto N."/>
            <person name="Oishi K."/>
            <person name="Kohara Y."/>
            <person name="Kobayashi M."/>
            <person name="Toyoda A."/>
            <person name="Sakaki Y."/>
            <person name="Sakurai T."/>
            <person name="Iida K."/>
            <person name="Akiyama K."/>
            <person name="Satou M."/>
            <person name="Toyoda T."/>
            <person name="Konagaya A."/>
            <person name="Carninci P."/>
            <person name="Kawai J."/>
            <person name="Hayashizaki Y."/>
            <person name="Shinozaki K."/>
        </authorList>
    </citation>
    <scope>NUCLEOTIDE SEQUENCE [LARGE SCALE MRNA]</scope>
    <source>
        <strain>cv. Columbia</strain>
    </source>
</reference>
<reference key="5">
    <citation type="journal article" date="2005" name="J. Mol. Evol.">
        <title>Evolution of NIN-like proteins in Arabidopsis, rice, and Lotus japonicus.</title>
        <authorList>
            <person name="Schauser L."/>
            <person name="Wieloch W."/>
            <person name="Stougaard J."/>
        </authorList>
    </citation>
    <scope>GENE FAMILY</scope>
    <scope>NOMENCLATURE</scope>
</reference>
<proteinExistence type="evidence at transcript level"/>
<comment type="function">
    <text evidence="1">Probable transcription factor.</text>
</comment>
<comment type="subcellular location">
    <subcellularLocation>
        <location evidence="3">Nucleus</location>
    </subcellularLocation>
</comment>
<protein>
    <recommendedName>
        <fullName>Protein NLP9</fullName>
        <shortName>AtNLP9</shortName>
    </recommendedName>
    <alternativeName>
        <fullName>NIN-like protein 9</fullName>
    </alternativeName>
    <alternativeName>
        <fullName>Nodule inception protein-like protein 8</fullName>
    </alternativeName>
</protein>
<feature type="chain" id="PRO_0000401494" description="Protein NLP9">
    <location>
        <begin position="1"/>
        <end position="894"/>
    </location>
</feature>
<feature type="domain" description="RWP-RK" evidence="3">
    <location>
        <begin position="517"/>
        <end position="603"/>
    </location>
</feature>
<feature type="domain" description="PB1" evidence="4">
    <location>
        <begin position="792"/>
        <end position="875"/>
    </location>
</feature>
<feature type="region of interest" description="Disordered" evidence="5">
    <location>
        <begin position="732"/>
        <end position="763"/>
    </location>
</feature>
<feature type="coiled-coil region" evidence="2">
    <location>
        <begin position="578"/>
        <end position="598"/>
    </location>
</feature>
<feature type="compositionally biased region" description="Low complexity" evidence="5">
    <location>
        <begin position="747"/>
        <end position="763"/>
    </location>
</feature>
<feature type="sequence conflict" description="In Ref. 3; AAQ62879 and 4; BAD93722." evidence="6" ref="3 4">
    <original>F</original>
    <variation>L</variation>
    <location>
        <position position="345"/>
    </location>
</feature>
<evidence type="ECO:0000250" key="1"/>
<evidence type="ECO:0000255" key="2"/>
<evidence type="ECO:0000255" key="3">
    <source>
        <dbReference type="PROSITE-ProRule" id="PRU00852"/>
    </source>
</evidence>
<evidence type="ECO:0000255" key="4">
    <source>
        <dbReference type="PROSITE-ProRule" id="PRU01081"/>
    </source>
</evidence>
<evidence type="ECO:0000256" key="5">
    <source>
        <dbReference type="SAM" id="MobiDB-lite"/>
    </source>
</evidence>
<evidence type="ECO:0000305" key="6"/>
<accession>Q9M1B0</accession>
<accession>Q6NQJ4</accession>
<keyword id="KW-0175">Coiled coil</keyword>
<keyword id="KW-0238">DNA-binding</keyword>
<keyword id="KW-0539">Nucleus</keyword>
<keyword id="KW-1185">Reference proteome</keyword>
<keyword id="KW-0804">Transcription</keyword>
<keyword id="KW-0805">Transcription regulation</keyword>
<sequence>MENPSASRDNKGFCFPDIPVEEMDGWVKNLISEEDMFSSSSTSELMNFESFASWCNSPSAADILFTQYGLSTSQSIIPFGGLEGSYACEKRPLDCTSVPRSLSHSLDEKMLKALSLFMEFSGEGILAQFWTPIKTGDQYMLSTCDQAYLLDSRLSGYREASRRFTFSAEANQCSYPGLPGRVFISGVPEWTSNVMYYKTAEYLRMKHALDNEVRGSIAIPVLEASGSSCCAVLELVTCREKPNFDVEMNSVCRALQAVNLQTSTIPRRQYLSSNQKEALAEIRDVLRAVCYAHRLPLALAWIPCSYSKGANDELVKVYGKNSKECSLLCIEETSCYVNDMEMEGFVNACLEHYLREGQGIVGKALISNKPSFSSDVKTFDICEYPLVQHARKFGLNAAVATKLRSTFTGDNDYILEFFLPVSMKGSSEQQLLLDSLSGTMQRLCRTLKTVSDAESIDGTEFGSRSVEMTNLPQATVSVGSFHTTFLDTDVNSTRSTFSNISSNKRNEMAGSQGTLQQEISGARRLEKKKSSTEKNVSLNVLQQYFSGSLKDAAKSLGVCPTTLKRICRQHGIMRWPSRKINKVNRSLRKIQTVLDSVQGVEGGLKFDSVTGEFVAVGPFIQEFGTQKSLSSHDEDALARSQGDMDEDVSVEPLEVKSHDGGGVKLEEDVETNHQAGPGSLKKPWTWISKQSGLIYSDDTDIGKRSEEVNKDKEDLCVRRCLSSVALAGDGMNTRIERGNGTVEPNHSISSSMSDSSNSSGAVLLGSSSASLEQNWNQIRTHNNSGESGSSSTLTVKATYREDTVRFKLDPYVVGCSQLYREVAKRFKLQEGAFQLKYLDDEEEWVMLVTDSDLHECFEILNGMRKHTVKFLVRDIPNTAMGSSAGSNGYLGTGT</sequence>
<name>NLP9_ARATH</name>
<gene>
    <name type="primary">NLP9</name>
    <name type="ordered locus">At3g59580</name>
    <name type="ORF">T16L24.130</name>
</gene>
<dbReference type="EMBL" id="AL138659">
    <property type="protein sequence ID" value="CAB75455.1"/>
    <property type="molecule type" value="Genomic_DNA"/>
</dbReference>
<dbReference type="EMBL" id="CP002686">
    <property type="protein sequence ID" value="AEE79941.1"/>
    <property type="molecule type" value="Genomic_DNA"/>
</dbReference>
<dbReference type="EMBL" id="CP002686">
    <property type="protein sequence ID" value="AEE79942.1"/>
    <property type="molecule type" value="Genomic_DNA"/>
</dbReference>
<dbReference type="EMBL" id="CP002686">
    <property type="protein sequence ID" value="ANM65151.1"/>
    <property type="molecule type" value="Genomic_DNA"/>
</dbReference>
<dbReference type="EMBL" id="BT010459">
    <property type="protein sequence ID" value="AAQ62879.1"/>
    <property type="molecule type" value="mRNA"/>
</dbReference>
<dbReference type="EMBL" id="AK220674">
    <property type="protein sequence ID" value="BAD93722.1"/>
    <property type="molecule type" value="mRNA"/>
</dbReference>
<dbReference type="PIR" id="T49299">
    <property type="entry name" value="T49299"/>
</dbReference>
<dbReference type="RefSeq" id="NP_001030895.1">
    <property type="nucleotide sequence ID" value="NM_001035818.3"/>
</dbReference>
<dbReference type="RefSeq" id="NP_001327143.1">
    <property type="nucleotide sequence ID" value="NM_001339989.1"/>
</dbReference>
<dbReference type="RefSeq" id="NP_191517.1">
    <property type="nucleotide sequence ID" value="NM_115820.4"/>
</dbReference>
<dbReference type="SMR" id="Q9M1B0"/>
<dbReference type="FunCoup" id="Q9M1B0">
    <property type="interactions" value="84"/>
</dbReference>
<dbReference type="STRING" id="3702.Q9M1B0"/>
<dbReference type="PaxDb" id="3702-AT3G59580.2"/>
<dbReference type="ProteomicsDB" id="251178"/>
<dbReference type="EnsemblPlants" id="AT3G59580.1">
    <property type="protein sequence ID" value="AT3G59580.1"/>
    <property type="gene ID" value="AT3G59580"/>
</dbReference>
<dbReference type="EnsemblPlants" id="AT3G59580.2">
    <property type="protein sequence ID" value="AT3G59580.2"/>
    <property type="gene ID" value="AT3G59580"/>
</dbReference>
<dbReference type="EnsemblPlants" id="AT3G59580.3">
    <property type="protein sequence ID" value="AT3G59580.3"/>
    <property type="gene ID" value="AT3G59580"/>
</dbReference>
<dbReference type="GeneID" id="825127"/>
<dbReference type="Gramene" id="AT3G59580.1">
    <property type="protein sequence ID" value="AT3G59580.1"/>
    <property type="gene ID" value="AT3G59580"/>
</dbReference>
<dbReference type="Gramene" id="AT3G59580.2">
    <property type="protein sequence ID" value="AT3G59580.2"/>
    <property type="gene ID" value="AT3G59580"/>
</dbReference>
<dbReference type="Gramene" id="AT3G59580.3">
    <property type="protein sequence ID" value="AT3G59580.3"/>
    <property type="gene ID" value="AT3G59580"/>
</dbReference>
<dbReference type="KEGG" id="ath:AT3G59580"/>
<dbReference type="Araport" id="AT3G59580"/>
<dbReference type="TAIR" id="AT3G59580">
    <property type="gene designation" value="NLP9"/>
</dbReference>
<dbReference type="eggNOG" id="ENOG502QQ6H">
    <property type="taxonomic scope" value="Eukaryota"/>
</dbReference>
<dbReference type="HOGENOM" id="CLU_008971_0_0_1"/>
<dbReference type="InParanoid" id="Q9M1B0"/>
<dbReference type="OMA" id="FLHACMG"/>
<dbReference type="PhylomeDB" id="Q9M1B0"/>
<dbReference type="PRO" id="PR:Q9M1B0"/>
<dbReference type="Proteomes" id="UP000006548">
    <property type="component" value="Chromosome 3"/>
</dbReference>
<dbReference type="ExpressionAtlas" id="Q9M1B0">
    <property type="expression patterns" value="baseline and differential"/>
</dbReference>
<dbReference type="GO" id="GO:0005634">
    <property type="term" value="C:nucleus"/>
    <property type="evidence" value="ECO:0007669"/>
    <property type="project" value="UniProtKB-SubCell"/>
</dbReference>
<dbReference type="GO" id="GO:0003677">
    <property type="term" value="F:DNA binding"/>
    <property type="evidence" value="ECO:0007669"/>
    <property type="project" value="UniProtKB-KW"/>
</dbReference>
<dbReference type="GO" id="GO:0003700">
    <property type="term" value="F:DNA-binding transcription factor activity"/>
    <property type="evidence" value="ECO:0000250"/>
    <property type="project" value="TAIR"/>
</dbReference>
<dbReference type="CDD" id="cd06407">
    <property type="entry name" value="PB1_NLP"/>
    <property type="match status" value="1"/>
</dbReference>
<dbReference type="Gene3D" id="3.10.20.90">
    <property type="entry name" value="Phosphatidylinositol 3-kinase Catalytic Subunit, Chain A, domain 1"/>
    <property type="match status" value="1"/>
</dbReference>
<dbReference type="InterPro" id="IPR045012">
    <property type="entry name" value="NLP"/>
</dbReference>
<dbReference type="InterPro" id="IPR055081">
    <property type="entry name" value="NLP1-9_GAF"/>
</dbReference>
<dbReference type="InterPro" id="IPR053793">
    <property type="entry name" value="PB1-like"/>
</dbReference>
<dbReference type="InterPro" id="IPR000270">
    <property type="entry name" value="PB1_dom"/>
</dbReference>
<dbReference type="InterPro" id="IPR034891">
    <property type="entry name" value="PB1_NLP"/>
</dbReference>
<dbReference type="InterPro" id="IPR003035">
    <property type="entry name" value="RWP-RK_dom"/>
</dbReference>
<dbReference type="PANTHER" id="PTHR32002">
    <property type="entry name" value="PROTEIN NLP8"/>
    <property type="match status" value="1"/>
</dbReference>
<dbReference type="PANTHER" id="PTHR32002:SF47">
    <property type="entry name" value="PROTEIN NLP9"/>
    <property type="match status" value="1"/>
</dbReference>
<dbReference type="Pfam" id="PF22922">
    <property type="entry name" value="GAF_NLP"/>
    <property type="match status" value="1"/>
</dbReference>
<dbReference type="Pfam" id="PF00564">
    <property type="entry name" value="PB1"/>
    <property type="match status" value="1"/>
</dbReference>
<dbReference type="Pfam" id="PF02042">
    <property type="entry name" value="RWP-RK"/>
    <property type="match status" value="1"/>
</dbReference>
<dbReference type="SMART" id="SM00666">
    <property type="entry name" value="PB1"/>
    <property type="match status" value="1"/>
</dbReference>
<dbReference type="SUPFAM" id="SSF54277">
    <property type="entry name" value="CAD &amp; PB1 domains"/>
    <property type="match status" value="1"/>
</dbReference>
<dbReference type="PROSITE" id="PS51745">
    <property type="entry name" value="PB1"/>
    <property type="match status" value="1"/>
</dbReference>
<dbReference type="PROSITE" id="PS51519">
    <property type="entry name" value="RWP_RK"/>
    <property type="match status" value="1"/>
</dbReference>